<comment type="function">
    <text evidence="1 3">Plays a key role in early steps of protein N-linked glycosylation by being involved in the conversion of polyprenol into dolichol (PubMed:26628744). Acts as a polyprenal reductase that mediates the reduction of polyprenal into dolichal in a NADP-dependent mechanism (By similarity). Dolichols are required for the synthesis of dolichol-linked monosaccharides and the oligosaccharide precursor used for N-glycosylation (PubMed:26628744). Involved in the regulation of plant growth and reproductive processes (PubMed:26628744).</text>
</comment>
<comment type="catalytic activity">
    <reaction evidence="1">
        <text>a di-trans,poly-cis-dolichal + NADP(+) = a di-trans,poly-cis-polyprenal + NADPH + H(+)</text>
        <dbReference type="Rhea" id="RHEA:80727"/>
        <dbReference type="Rhea" id="RHEA-COMP:19536"/>
        <dbReference type="Rhea" id="RHEA-COMP:19537"/>
        <dbReference type="ChEBI" id="CHEBI:15378"/>
        <dbReference type="ChEBI" id="CHEBI:57783"/>
        <dbReference type="ChEBI" id="CHEBI:58349"/>
        <dbReference type="ChEBI" id="CHEBI:231623"/>
        <dbReference type="ChEBI" id="CHEBI:231637"/>
        <dbReference type="EC" id="1.3.1.94"/>
    </reaction>
    <physiologicalReaction direction="right-to-left" evidence="1">
        <dbReference type="Rhea" id="RHEA:80729"/>
    </physiologicalReaction>
</comment>
<comment type="pathway">
    <text evidence="3">Protein modification; protein glycosylation.</text>
</comment>
<comment type="subcellular location">
    <subcellularLocation>
        <location evidence="3">Cell membrane</location>
        <topology evidence="2">Multi-pass membrane protein</topology>
    </subcellularLocation>
</comment>
<comment type="tissue specificity">
    <text evidence="3">Expressed in roots and flowers.</text>
</comment>
<comment type="similarity">
    <text evidence="5">Belongs to the steroid 5-alpha reductase family. Polyprenal reductase subfamily.</text>
</comment>
<comment type="caution">
    <text evidence="1 3">Was initially characterized as a polyprenol reductase, mediating the conversion of polyprenol into dolichol (PubMed:26628744). However, it was later shown to catalyze an intermediate step in this pathway and reduce polyprenal (By similarity).</text>
</comment>
<dbReference type="EC" id="1.3.1.94" evidence="1"/>
<dbReference type="EMBL" id="AC010926">
    <property type="protein sequence ID" value="AAG51854.1"/>
    <property type="molecule type" value="Genomic_DNA"/>
</dbReference>
<dbReference type="EMBL" id="CP002684">
    <property type="protein sequence ID" value="AEE35345.1"/>
    <property type="molecule type" value="Genomic_DNA"/>
</dbReference>
<dbReference type="PIR" id="D96750">
    <property type="entry name" value="D96750"/>
</dbReference>
<dbReference type="RefSeq" id="NP_177403.1">
    <property type="nucleotide sequence ID" value="NM_105918.3"/>
</dbReference>
<dbReference type="SMR" id="Q9CAH5"/>
<dbReference type="FunCoup" id="Q9CAH5">
    <property type="interactions" value="2195"/>
</dbReference>
<dbReference type="STRING" id="3702.Q9CAH5"/>
<dbReference type="PaxDb" id="3702-AT1G72590.1"/>
<dbReference type="ProteomicsDB" id="226287"/>
<dbReference type="EnsemblPlants" id="AT1G72590.1">
    <property type="protein sequence ID" value="AT1G72590.1"/>
    <property type="gene ID" value="AT1G72590"/>
</dbReference>
<dbReference type="GeneID" id="843591"/>
<dbReference type="Gramene" id="AT1G72590.1">
    <property type="protein sequence ID" value="AT1G72590.1"/>
    <property type="gene ID" value="AT1G72590"/>
</dbReference>
<dbReference type="KEGG" id="ath:AT1G72590"/>
<dbReference type="Araport" id="AT1G72590"/>
<dbReference type="TAIR" id="AT1G72590">
    <property type="gene designation" value="PPRD1"/>
</dbReference>
<dbReference type="eggNOG" id="KOG1640">
    <property type="taxonomic scope" value="Eukaryota"/>
</dbReference>
<dbReference type="HOGENOM" id="CLU_044409_1_0_1"/>
<dbReference type="InParanoid" id="Q9CAH5"/>
<dbReference type="OMA" id="WSLHGKN"/>
<dbReference type="PhylomeDB" id="Q9CAH5"/>
<dbReference type="BRENDA" id="1.3.1.B13">
    <property type="organism ID" value="399"/>
</dbReference>
<dbReference type="UniPathway" id="UPA00378"/>
<dbReference type="PRO" id="PR:Q9CAH5"/>
<dbReference type="Proteomes" id="UP000006548">
    <property type="component" value="Chromosome 1"/>
</dbReference>
<dbReference type="ExpressionAtlas" id="Q9CAH5">
    <property type="expression patterns" value="baseline and differential"/>
</dbReference>
<dbReference type="GO" id="GO:0005886">
    <property type="term" value="C:plasma membrane"/>
    <property type="evidence" value="ECO:0007669"/>
    <property type="project" value="UniProtKB-SubCell"/>
</dbReference>
<dbReference type="GO" id="GO:0003865">
    <property type="term" value="F:3-oxo-5-alpha-steroid 4-dehydrogenase activity"/>
    <property type="evidence" value="ECO:0000316"/>
    <property type="project" value="TAIR"/>
</dbReference>
<dbReference type="GO" id="GO:0160198">
    <property type="term" value="F:polyprenal reductase activity"/>
    <property type="evidence" value="ECO:0000250"/>
    <property type="project" value="UniProtKB"/>
</dbReference>
<dbReference type="GO" id="GO:0016229">
    <property type="term" value="F:steroid dehydrogenase activity"/>
    <property type="evidence" value="ECO:0000314"/>
    <property type="project" value="CACAO"/>
</dbReference>
<dbReference type="GO" id="GO:0019408">
    <property type="term" value="P:dolichol biosynthetic process"/>
    <property type="evidence" value="ECO:0000250"/>
    <property type="project" value="UniProtKB"/>
</dbReference>
<dbReference type="GO" id="GO:0006488">
    <property type="term" value="P:dolichol-linked oligosaccharide biosynthetic process"/>
    <property type="evidence" value="ECO:0007669"/>
    <property type="project" value="InterPro"/>
</dbReference>
<dbReference type="GO" id="GO:0016093">
    <property type="term" value="P:polyprenol metabolic process"/>
    <property type="evidence" value="ECO:0000315"/>
    <property type="project" value="TAIR"/>
</dbReference>
<dbReference type="InterPro" id="IPR001104">
    <property type="entry name" value="3-oxo-5_a-steroid_4-DH_C"/>
</dbReference>
<dbReference type="InterPro" id="IPR039698">
    <property type="entry name" value="Dfg10/SRD5A3"/>
</dbReference>
<dbReference type="PANTHER" id="PTHR14624">
    <property type="entry name" value="DFG10 PROTEIN"/>
    <property type="match status" value="1"/>
</dbReference>
<dbReference type="PANTHER" id="PTHR14624:SF0">
    <property type="entry name" value="POLYPRENOL REDUCTASE"/>
    <property type="match status" value="1"/>
</dbReference>
<dbReference type="Pfam" id="PF02544">
    <property type="entry name" value="Steroid_dh"/>
    <property type="match status" value="1"/>
</dbReference>
<dbReference type="PROSITE" id="PS50244">
    <property type="entry name" value="S5A_REDUCTASE"/>
    <property type="match status" value="1"/>
</dbReference>
<reference key="1">
    <citation type="journal article" date="2000" name="Nature">
        <title>Sequence and analysis of chromosome 1 of the plant Arabidopsis thaliana.</title>
        <authorList>
            <person name="Theologis A."/>
            <person name="Ecker J.R."/>
            <person name="Palm C.J."/>
            <person name="Federspiel N.A."/>
            <person name="Kaul S."/>
            <person name="White O."/>
            <person name="Alonso J."/>
            <person name="Altafi H."/>
            <person name="Araujo R."/>
            <person name="Bowman C.L."/>
            <person name="Brooks S.Y."/>
            <person name="Buehler E."/>
            <person name="Chan A."/>
            <person name="Chao Q."/>
            <person name="Chen H."/>
            <person name="Cheuk R.F."/>
            <person name="Chin C.W."/>
            <person name="Chung M.K."/>
            <person name="Conn L."/>
            <person name="Conway A.B."/>
            <person name="Conway A.R."/>
            <person name="Creasy T.H."/>
            <person name="Dewar K."/>
            <person name="Dunn P."/>
            <person name="Etgu P."/>
            <person name="Feldblyum T.V."/>
            <person name="Feng J.-D."/>
            <person name="Fong B."/>
            <person name="Fujii C.Y."/>
            <person name="Gill J.E."/>
            <person name="Goldsmith A.D."/>
            <person name="Haas B."/>
            <person name="Hansen N.F."/>
            <person name="Hughes B."/>
            <person name="Huizar L."/>
            <person name="Hunter J.L."/>
            <person name="Jenkins J."/>
            <person name="Johnson-Hopson C."/>
            <person name="Khan S."/>
            <person name="Khaykin E."/>
            <person name="Kim C.J."/>
            <person name="Koo H.L."/>
            <person name="Kremenetskaia I."/>
            <person name="Kurtz D.B."/>
            <person name="Kwan A."/>
            <person name="Lam B."/>
            <person name="Langin-Hooper S."/>
            <person name="Lee A."/>
            <person name="Lee J.M."/>
            <person name="Lenz C.A."/>
            <person name="Li J.H."/>
            <person name="Li Y.-P."/>
            <person name="Lin X."/>
            <person name="Liu S.X."/>
            <person name="Liu Z.A."/>
            <person name="Luros J.S."/>
            <person name="Maiti R."/>
            <person name="Marziali A."/>
            <person name="Militscher J."/>
            <person name="Miranda M."/>
            <person name="Nguyen M."/>
            <person name="Nierman W.C."/>
            <person name="Osborne B.I."/>
            <person name="Pai G."/>
            <person name="Peterson J."/>
            <person name="Pham P.K."/>
            <person name="Rizzo M."/>
            <person name="Rooney T."/>
            <person name="Rowley D."/>
            <person name="Sakano H."/>
            <person name="Salzberg S.L."/>
            <person name="Schwartz J.R."/>
            <person name="Shinn P."/>
            <person name="Southwick A.M."/>
            <person name="Sun H."/>
            <person name="Tallon L.J."/>
            <person name="Tambunga G."/>
            <person name="Toriumi M.J."/>
            <person name="Town C.D."/>
            <person name="Utterback T."/>
            <person name="Van Aken S."/>
            <person name="Vaysberg M."/>
            <person name="Vysotskaia V.S."/>
            <person name="Walker M."/>
            <person name="Wu D."/>
            <person name="Yu G."/>
            <person name="Fraser C.M."/>
            <person name="Venter J.C."/>
            <person name="Davis R.W."/>
        </authorList>
    </citation>
    <scope>NUCLEOTIDE SEQUENCE [LARGE SCALE GENOMIC DNA]</scope>
    <source>
        <strain>cv. Columbia</strain>
    </source>
</reference>
<reference key="2">
    <citation type="journal article" date="2017" name="Plant J.">
        <title>Araport11: a complete reannotation of the Arabidopsis thaliana reference genome.</title>
        <authorList>
            <person name="Cheng C.Y."/>
            <person name="Krishnakumar V."/>
            <person name="Chan A.P."/>
            <person name="Thibaud-Nissen F."/>
            <person name="Schobel S."/>
            <person name="Town C.D."/>
        </authorList>
    </citation>
    <scope>GENOME REANNOTATION</scope>
    <source>
        <strain>cv. Columbia</strain>
    </source>
</reference>
<reference key="3">
    <citation type="journal article" date="2015" name="Plant Cell">
        <title>POLYPRENOL REDUCTASE2 deficiency is lethal in Arabidopsis due to male sterility.</title>
        <authorList>
            <person name="Jozwiak A."/>
            <person name="Gutkowska M."/>
            <person name="Gawarecka K."/>
            <person name="Surmacz L."/>
            <person name="Buczkowska A."/>
            <person name="Lichocka M."/>
            <person name="Nowakowska J."/>
            <person name="Swiezewska E."/>
        </authorList>
    </citation>
    <scope>FUNCTION</scope>
    <scope>CATALYTIC ACTIVITY</scope>
    <scope>SUBCELLULAR LOCATION</scope>
    <scope>TISSUE SPECIFICITY</scope>
</reference>
<accession>Q9CAH5</accession>
<protein>
    <recommendedName>
        <fullName evidence="5">Polyprenal reductase 1</fullName>
        <ecNumber evidence="1">1.3.1.94</ecNumber>
    </recommendedName>
</protein>
<evidence type="ECO:0000250" key="1">
    <source>
        <dbReference type="UniProtKB" id="Q9H8P0"/>
    </source>
</evidence>
<evidence type="ECO:0000255" key="2"/>
<evidence type="ECO:0000269" key="3">
    <source>
    </source>
</evidence>
<evidence type="ECO:0000303" key="4">
    <source>
    </source>
</evidence>
<evidence type="ECO:0000305" key="5"/>
<evidence type="ECO:0000312" key="6">
    <source>
        <dbReference type="Araport" id="AT1G72590"/>
    </source>
</evidence>
<evidence type="ECO:0000312" key="7">
    <source>
        <dbReference type="EMBL" id="AAG51854.1"/>
    </source>
</evidence>
<name>PPRD1_ARATH</name>
<keyword id="KW-1003">Cell membrane</keyword>
<keyword id="KW-0472">Membrane</keyword>
<keyword id="KW-0521">NADP</keyword>
<keyword id="KW-0560">Oxidoreductase</keyword>
<keyword id="KW-1185">Reference proteome</keyword>
<keyword id="KW-0812">Transmembrane</keyword>
<keyword id="KW-1133">Transmembrane helix</keyword>
<proteinExistence type="evidence at protein level"/>
<organism>
    <name type="scientific">Arabidopsis thaliana</name>
    <name type="common">Mouse-ear cress</name>
    <dbReference type="NCBI Taxonomy" id="3702"/>
    <lineage>
        <taxon>Eukaryota</taxon>
        <taxon>Viridiplantae</taxon>
        <taxon>Streptophyta</taxon>
        <taxon>Embryophyta</taxon>
        <taxon>Tracheophyta</taxon>
        <taxon>Spermatophyta</taxon>
        <taxon>Magnoliopsida</taxon>
        <taxon>eudicotyledons</taxon>
        <taxon>Gunneridae</taxon>
        <taxon>Pentapetalae</taxon>
        <taxon>rosids</taxon>
        <taxon>malvids</taxon>
        <taxon>Brassicales</taxon>
        <taxon>Brassicaceae</taxon>
        <taxon>Camelineae</taxon>
        <taxon>Arabidopsis</taxon>
    </lineage>
</organism>
<feature type="chain" id="PRO_0000398655" description="Polyprenal reductase 1">
    <location>
        <begin position="1"/>
        <end position="320"/>
    </location>
</feature>
<feature type="transmembrane region" description="Helical" evidence="2">
    <location>
        <begin position="5"/>
        <end position="25"/>
    </location>
</feature>
<feature type="transmembrane region" description="Helical" evidence="2">
    <location>
        <begin position="64"/>
        <end position="84"/>
    </location>
</feature>
<feature type="transmembrane region" description="Helical" evidence="2">
    <location>
        <begin position="143"/>
        <end position="163"/>
    </location>
</feature>
<feature type="transmembrane region" description="Helical" evidence="2">
    <location>
        <begin position="200"/>
        <end position="220"/>
    </location>
</feature>
<feature type="transmembrane region" description="Helical" evidence="2">
    <location>
        <begin position="243"/>
        <end position="263"/>
    </location>
</feature>
<feature type="transmembrane region" description="Helical" evidence="2">
    <location>
        <begin position="266"/>
        <end position="286"/>
    </location>
</feature>
<sequence length="320" mass="36313">MEVEIVWLVKAAWITVWIVSILPLVIASIPSSKLNSFRELVLSFAGRGKILHPSSQKFTVPQKFFGHFYVVGVVWTTLLLAATWMYACKMAGGSHVFSFHMTHVEHRFKVGRAVFLLLLMEIHVLRRVIESFYVFKYSTSARMHILAYVGALFYYVAAPLSLCSNIAPEVARFVGSQVAEFIASGKSHSHDFNLLLSISPLMKLGSLQWIGGAIFLWGWIHQRRCHAILGSLREYPSQAKEYIIPYGDWFEMVSCPHFLAEIVLYLGLLISSGGTDISIWLLFGFVAANLTYAAGETHRWYLQKFENYPASRHAIFPHVY</sequence>
<gene>
    <name evidence="4" type="primary">PPRD1</name>
    <name evidence="6" type="ordered locus">At1g72590</name>
    <name evidence="7" type="ORF">F28P22.22</name>
</gene>